<comment type="function">
    <text evidence="1">Subunit of the CTDK-I complex, which hyperphosphorylates the C-terminal heptapeptide repeat domain (CTD) of the largest RNA polymerase II subunit. As part of the CTDK-I complex, involved in RNA polymerase II transcriptional elongation and pre-mRNA 3'-end processing. Together with ctk2, required for ctk1/lsk1 CTD kinase activation (By similarity).</text>
</comment>
<comment type="subunit">
    <text evidence="1">CTDK-I consists of three subunits, ctk1/lsk1, ctk2/lsc1 and ctk3 (also called alpha, beta and gamma).</text>
</comment>
<comment type="subcellular location">
    <subcellularLocation>
        <location evidence="5">Cytoplasm</location>
    </subcellularLocation>
    <subcellularLocation>
        <location evidence="5">Nucleus</location>
    </subcellularLocation>
</comment>
<comment type="similarity">
    <text evidence="6">Belongs to the CTK3 family.</text>
</comment>
<feature type="chain" id="PRO_0000338604" description="CTD kinase subunit gamma">
    <location>
        <begin position="1"/>
        <end position="218"/>
    </location>
</feature>
<feature type="domain" description="CID" evidence="3">
    <location>
        <begin position="2"/>
        <end position="138"/>
    </location>
</feature>
<feature type="region of interest" description="Disordered" evidence="4">
    <location>
        <begin position="137"/>
        <end position="157"/>
    </location>
</feature>
<feature type="compositionally biased region" description="Polar residues" evidence="4">
    <location>
        <begin position="141"/>
        <end position="152"/>
    </location>
</feature>
<feature type="helix" evidence="8">
    <location>
        <begin position="3"/>
        <end position="14"/>
    </location>
</feature>
<feature type="helix" evidence="8">
    <location>
        <begin position="21"/>
        <end position="23"/>
    </location>
</feature>
<feature type="helix" evidence="8">
    <location>
        <begin position="25"/>
        <end position="33"/>
    </location>
</feature>
<feature type="helix" evidence="8">
    <location>
        <begin position="35"/>
        <end position="37"/>
    </location>
</feature>
<feature type="helix" evidence="8">
    <location>
        <begin position="38"/>
        <end position="51"/>
    </location>
</feature>
<feature type="helix" evidence="8">
    <location>
        <begin position="54"/>
        <end position="73"/>
    </location>
</feature>
<feature type="helix" evidence="8">
    <location>
        <begin position="80"/>
        <end position="86"/>
    </location>
</feature>
<feature type="helix" evidence="8">
    <location>
        <begin position="88"/>
        <end position="95"/>
    </location>
</feature>
<feature type="helix" evidence="8">
    <location>
        <begin position="100"/>
        <end position="118"/>
    </location>
</feature>
<feature type="helix" evidence="8">
    <location>
        <begin position="124"/>
        <end position="139"/>
    </location>
</feature>
<reference evidence="7" key="1">
    <citation type="journal article" date="2002" name="Nature">
        <title>The genome sequence of Schizosaccharomyces pombe.</title>
        <authorList>
            <person name="Wood V."/>
            <person name="Gwilliam R."/>
            <person name="Rajandream M.A."/>
            <person name="Lyne M.H."/>
            <person name="Lyne R."/>
            <person name="Stewart A."/>
            <person name="Sgouros J.G."/>
            <person name="Peat N."/>
            <person name="Hayles J."/>
            <person name="Baker S.G."/>
            <person name="Basham D."/>
            <person name="Bowman S."/>
            <person name="Brooks K."/>
            <person name="Brown D."/>
            <person name="Brown S."/>
            <person name="Chillingworth T."/>
            <person name="Churcher C.M."/>
            <person name="Collins M."/>
            <person name="Connor R."/>
            <person name="Cronin A."/>
            <person name="Davis P."/>
            <person name="Feltwell T."/>
            <person name="Fraser A."/>
            <person name="Gentles S."/>
            <person name="Goble A."/>
            <person name="Hamlin N."/>
            <person name="Harris D.E."/>
            <person name="Hidalgo J."/>
            <person name="Hodgson G."/>
            <person name="Holroyd S."/>
            <person name="Hornsby T."/>
            <person name="Howarth S."/>
            <person name="Huckle E.J."/>
            <person name="Hunt S."/>
            <person name="Jagels K."/>
            <person name="James K.D."/>
            <person name="Jones L."/>
            <person name="Jones M."/>
            <person name="Leather S."/>
            <person name="McDonald S."/>
            <person name="McLean J."/>
            <person name="Mooney P."/>
            <person name="Moule S."/>
            <person name="Mungall K.L."/>
            <person name="Murphy L.D."/>
            <person name="Niblett D."/>
            <person name="Odell C."/>
            <person name="Oliver K."/>
            <person name="O'Neil S."/>
            <person name="Pearson D."/>
            <person name="Quail M.A."/>
            <person name="Rabbinowitsch E."/>
            <person name="Rutherford K.M."/>
            <person name="Rutter S."/>
            <person name="Saunders D."/>
            <person name="Seeger K."/>
            <person name="Sharp S."/>
            <person name="Skelton J."/>
            <person name="Simmonds M.N."/>
            <person name="Squares R."/>
            <person name="Squares S."/>
            <person name="Stevens K."/>
            <person name="Taylor K."/>
            <person name="Taylor R.G."/>
            <person name="Tivey A."/>
            <person name="Walsh S.V."/>
            <person name="Warren T."/>
            <person name="Whitehead S."/>
            <person name="Woodward J.R."/>
            <person name="Volckaert G."/>
            <person name="Aert R."/>
            <person name="Robben J."/>
            <person name="Grymonprez B."/>
            <person name="Weltjens I."/>
            <person name="Vanstreels E."/>
            <person name="Rieger M."/>
            <person name="Schaefer M."/>
            <person name="Mueller-Auer S."/>
            <person name="Gabel C."/>
            <person name="Fuchs M."/>
            <person name="Duesterhoeft A."/>
            <person name="Fritzc C."/>
            <person name="Holzer E."/>
            <person name="Moestl D."/>
            <person name="Hilbert H."/>
            <person name="Borzym K."/>
            <person name="Langer I."/>
            <person name="Beck A."/>
            <person name="Lehrach H."/>
            <person name="Reinhardt R."/>
            <person name="Pohl T.M."/>
            <person name="Eger P."/>
            <person name="Zimmermann W."/>
            <person name="Wedler H."/>
            <person name="Wambutt R."/>
            <person name="Purnelle B."/>
            <person name="Goffeau A."/>
            <person name="Cadieu E."/>
            <person name="Dreano S."/>
            <person name="Gloux S."/>
            <person name="Lelaure V."/>
            <person name="Mottier S."/>
            <person name="Galibert F."/>
            <person name="Aves S.J."/>
            <person name="Xiang Z."/>
            <person name="Hunt C."/>
            <person name="Moore K."/>
            <person name="Hurst S.M."/>
            <person name="Lucas M."/>
            <person name="Rochet M."/>
            <person name="Gaillardin C."/>
            <person name="Tallada V.A."/>
            <person name="Garzon A."/>
            <person name="Thode G."/>
            <person name="Daga R.R."/>
            <person name="Cruzado L."/>
            <person name="Jimenez J."/>
            <person name="Sanchez M."/>
            <person name="del Rey F."/>
            <person name="Benito J."/>
            <person name="Dominguez A."/>
            <person name="Revuelta J.L."/>
            <person name="Moreno S."/>
            <person name="Armstrong J."/>
            <person name="Forsburg S.L."/>
            <person name="Cerutti L."/>
            <person name="Lowe T."/>
            <person name="McCombie W.R."/>
            <person name="Paulsen I."/>
            <person name="Potashkin J."/>
            <person name="Shpakovski G.V."/>
            <person name="Ussery D."/>
            <person name="Barrell B.G."/>
            <person name="Nurse P."/>
        </authorList>
    </citation>
    <scope>NUCLEOTIDE SEQUENCE [LARGE SCALE GENOMIC DNA]</scope>
    <source>
        <strain>972 / ATCC 24843</strain>
    </source>
</reference>
<reference evidence="6" key="2">
    <citation type="journal article" date="2006" name="Nat. Biotechnol.">
        <title>ORFeome cloning and global analysis of protein localization in the fission yeast Schizosaccharomyces pombe.</title>
        <authorList>
            <person name="Matsuyama A."/>
            <person name="Arai R."/>
            <person name="Yashiroda Y."/>
            <person name="Shirai A."/>
            <person name="Kamata A."/>
            <person name="Sekido S."/>
            <person name="Kobayashi Y."/>
            <person name="Hashimoto A."/>
            <person name="Hamamoto M."/>
            <person name="Hiraoka Y."/>
            <person name="Horinouchi S."/>
            <person name="Yoshida M."/>
        </authorList>
    </citation>
    <scope>SUBCELLULAR LOCATION [LARGE SCALE ANALYSIS]</scope>
</reference>
<sequence length="218" mass="24640">MDPFEGRMTFLQLLGKLNASQFSQIKPAQFAIKHLDLEEDLYSCIWEELESGSFNTRVNIMYFVDTLCEMCLKNGLTGGYLNMISRDICKLVQNVAPIGAAGAANAPEVRKVLQSLHEKKVIDDNQYKDAMATVEAHEQASKSGDTSTSGAISKNDILKRIEEDRERHKRMRENIWAISEPELEAEIAWNTTQGITESDLESLKDEYEKFNECLHATS</sequence>
<proteinExistence type="evidence at protein level"/>
<protein>
    <recommendedName>
        <fullName>CTD kinase subunit gamma</fullName>
        <shortName>CTDK-I gamma subunit</shortName>
    </recommendedName>
    <alternativeName>
        <fullName>CTD kinase subunit 3</fullName>
    </alternativeName>
</protein>
<dbReference type="EMBL" id="CU329672">
    <property type="protein sequence ID" value="CAB60682.1"/>
    <property type="molecule type" value="Genomic_DNA"/>
</dbReference>
<dbReference type="PIR" id="T50440">
    <property type="entry name" value="T50440"/>
</dbReference>
<dbReference type="RefSeq" id="NP_588082.1">
    <property type="nucleotide sequence ID" value="NM_001023074.2"/>
</dbReference>
<dbReference type="PDB" id="5CE7">
    <property type="method" value="X-ray"/>
    <property type="resolution" value="2.00 A"/>
    <property type="chains" value="A=1-140"/>
</dbReference>
<dbReference type="PDBsum" id="5CE7"/>
<dbReference type="SMR" id="Q9USJ8"/>
<dbReference type="BioGRID" id="276116">
    <property type="interactions" value="68"/>
</dbReference>
<dbReference type="STRING" id="284812.Q9USJ8"/>
<dbReference type="PaxDb" id="4896-SPCC4B3.08.1"/>
<dbReference type="EnsemblFungi" id="SPCC4B3.08.1">
    <property type="protein sequence ID" value="SPCC4B3.08.1:pep"/>
    <property type="gene ID" value="SPCC4B3.08"/>
</dbReference>
<dbReference type="GeneID" id="2539555"/>
<dbReference type="KEGG" id="spo:2539555"/>
<dbReference type="PomBase" id="SPCC4B3.08"/>
<dbReference type="VEuPathDB" id="FungiDB:SPCC4B3.08"/>
<dbReference type="eggNOG" id="ENOG502S1MK">
    <property type="taxonomic scope" value="Eukaryota"/>
</dbReference>
<dbReference type="HOGENOM" id="CLU_051552_0_0_1"/>
<dbReference type="InParanoid" id="Q9USJ8"/>
<dbReference type="OMA" id="DMGEDLH"/>
<dbReference type="PhylomeDB" id="Q9USJ8"/>
<dbReference type="BRENDA" id="2.7.11.23">
    <property type="organism ID" value="5613"/>
</dbReference>
<dbReference type="EvolutionaryTrace" id="Q9USJ8"/>
<dbReference type="PRO" id="PR:Q9USJ8"/>
<dbReference type="Proteomes" id="UP000002485">
    <property type="component" value="Chromosome III"/>
</dbReference>
<dbReference type="GO" id="GO:0070692">
    <property type="term" value="C:CTDK-1 complex"/>
    <property type="evidence" value="ECO:0000314"/>
    <property type="project" value="PomBase"/>
</dbReference>
<dbReference type="GO" id="GO:0005829">
    <property type="term" value="C:cytosol"/>
    <property type="evidence" value="ECO:0007005"/>
    <property type="project" value="PomBase"/>
</dbReference>
<dbReference type="GO" id="GO:0005634">
    <property type="term" value="C:nucleus"/>
    <property type="evidence" value="ECO:0007005"/>
    <property type="project" value="PomBase"/>
</dbReference>
<dbReference type="GO" id="GO:0005509">
    <property type="term" value="F:calcium ion binding"/>
    <property type="evidence" value="ECO:0000303"/>
    <property type="project" value="PomBase"/>
</dbReference>
<dbReference type="GO" id="GO:0006397">
    <property type="term" value="P:mRNA processing"/>
    <property type="evidence" value="ECO:0007669"/>
    <property type="project" value="UniProtKB-KW"/>
</dbReference>
<dbReference type="GO" id="GO:0032786">
    <property type="term" value="P:positive regulation of DNA-templated transcription, elongation"/>
    <property type="evidence" value="ECO:0000318"/>
    <property type="project" value="GO_Central"/>
</dbReference>
<dbReference type="GO" id="GO:0045943">
    <property type="term" value="P:positive regulation of transcription by RNA polymerase I"/>
    <property type="evidence" value="ECO:0000318"/>
    <property type="project" value="GO_Central"/>
</dbReference>
<dbReference type="GO" id="GO:0045944">
    <property type="term" value="P:positive regulation of transcription by RNA polymerase II"/>
    <property type="evidence" value="ECO:0000315"/>
    <property type="project" value="PomBase"/>
</dbReference>
<dbReference type="GO" id="GO:0032968">
    <property type="term" value="P:positive regulation of transcription elongation by RNA polymerase II"/>
    <property type="evidence" value="ECO:0000305"/>
    <property type="project" value="PomBase"/>
</dbReference>
<dbReference type="FunFam" id="1.25.40.90:FF:000032">
    <property type="entry name" value="CTD kinase subunit gamma"/>
    <property type="match status" value="1"/>
</dbReference>
<dbReference type="Gene3D" id="1.25.40.90">
    <property type="match status" value="1"/>
</dbReference>
<dbReference type="InterPro" id="IPR006569">
    <property type="entry name" value="CID_dom"/>
</dbReference>
<dbReference type="InterPro" id="IPR042326">
    <property type="entry name" value="Ctk3"/>
</dbReference>
<dbReference type="InterPro" id="IPR024637">
    <property type="entry name" value="Ctk3_C"/>
</dbReference>
<dbReference type="InterPro" id="IPR024638">
    <property type="entry name" value="Ctk3_N"/>
</dbReference>
<dbReference type="InterPro" id="IPR008942">
    <property type="entry name" value="ENTH_VHS"/>
</dbReference>
<dbReference type="PANTHER" id="PTHR28291">
    <property type="entry name" value="CTD KINASE SUBUNIT GAMMA"/>
    <property type="match status" value="1"/>
</dbReference>
<dbReference type="PANTHER" id="PTHR28291:SF1">
    <property type="entry name" value="CTD KINASE SUBUNIT GAMMA"/>
    <property type="match status" value="1"/>
</dbReference>
<dbReference type="Pfam" id="PF12243">
    <property type="entry name" value="CTK3"/>
    <property type="match status" value="1"/>
</dbReference>
<dbReference type="Pfam" id="PF12350">
    <property type="entry name" value="CTK3_C"/>
    <property type="match status" value="1"/>
</dbReference>
<dbReference type="PROSITE" id="PS51391">
    <property type="entry name" value="CID"/>
    <property type="match status" value="1"/>
</dbReference>
<evidence type="ECO:0000250" key="1"/>
<evidence type="ECO:0000250" key="2">
    <source>
        <dbReference type="UniProtKB" id="P46963"/>
    </source>
</evidence>
<evidence type="ECO:0000255" key="3">
    <source>
        <dbReference type="PROSITE-ProRule" id="PRU00724"/>
    </source>
</evidence>
<evidence type="ECO:0000256" key="4">
    <source>
        <dbReference type="SAM" id="MobiDB-lite"/>
    </source>
</evidence>
<evidence type="ECO:0000269" key="5">
    <source>
    </source>
</evidence>
<evidence type="ECO:0000305" key="6"/>
<evidence type="ECO:0000312" key="7">
    <source>
        <dbReference type="EMBL" id="CAB60682.1"/>
    </source>
</evidence>
<evidence type="ECO:0007829" key="8">
    <source>
        <dbReference type="PDB" id="5CE7"/>
    </source>
</evidence>
<organism>
    <name type="scientific">Schizosaccharomyces pombe (strain 972 / ATCC 24843)</name>
    <name type="common">Fission yeast</name>
    <dbReference type="NCBI Taxonomy" id="284812"/>
    <lineage>
        <taxon>Eukaryota</taxon>
        <taxon>Fungi</taxon>
        <taxon>Dikarya</taxon>
        <taxon>Ascomycota</taxon>
        <taxon>Taphrinomycotina</taxon>
        <taxon>Schizosaccharomycetes</taxon>
        <taxon>Schizosaccharomycetales</taxon>
        <taxon>Schizosaccharomycetaceae</taxon>
        <taxon>Schizosaccharomyces</taxon>
    </lineage>
</organism>
<gene>
    <name evidence="2" type="primary">ctk3</name>
    <name type="ORF">SPCC4B3.08</name>
</gene>
<accession>Q9USJ8</accession>
<name>CTK3_SCHPO</name>
<keyword id="KW-0002">3D-structure</keyword>
<keyword id="KW-0963">Cytoplasm</keyword>
<keyword id="KW-0507">mRNA processing</keyword>
<keyword id="KW-0539">Nucleus</keyword>
<keyword id="KW-1185">Reference proteome</keyword>
<keyword id="KW-0804">Transcription</keyword>